<feature type="initiator methionine" description="Removed" evidence="1">
    <location>
        <position position="1"/>
    </location>
</feature>
<feature type="chain" id="PRO_0000052544" description="Hemoglobin subunit alpha-1">
    <location>
        <begin position="2"/>
        <end position="143"/>
    </location>
</feature>
<feature type="domain" description="Globin" evidence="2">
    <location>
        <begin position="2"/>
        <end position="143"/>
    </location>
</feature>
<feature type="binding site" evidence="2">
    <location>
        <position position="60"/>
    </location>
    <ligand>
        <name>O2</name>
        <dbReference type="ChEBI" id="CHEBI:15379"/>
    </ligand>
</feature>
<feature type="binding site" description="proximal binding residue" evidence="2">
    <location>
        <position position="89"/>
    </location>
    <ligand>
        <name>heme b</name>
        <dbReference type="ChEBI" id="CHEBI:60344"/>
    </ligand>
    <ligandPart>
        <name>Fe</name>
        <dbReference type="ChEBI" id="CHEBI:18248"/>
    </ligandPart>
</feature>
<feature type="modified residue" description="N-acetylserine" evidence="3">
    <location>
        <position position="2"/>
    </location>
</feature>
<comment type="function">
    <text evidence="3">Involved in oxygen transport from gills to the various peripheral tissues.</text>
</comment>
<comment type="subunit">
    <text>Hb1 is a heterotetramer of two alpha-1 chains and two beta-1 chains.</text>
</comment>
<comment type="tissue specificity">
    <text evidence="3">Red blood cells.</text>
</comment>
<comment type="miscellaneous">
    <text>Hb1 displays a low, effector-enhanced Bohr effect and no Root effect.</text>
</comment>
<comment type="similarity">
    <text evidence="2">Belongs to the globin family.</text>
</comment>
<keyword id="KW-0007">Acetylation</keyword>
<keyword id="KW-0903">Direct protein sequencing</keyword>
<keyword id="KW-0349">Heme</keyword>
<keyword id="KW-0408">Iron</keyword>
<keyword id="KW-0479">Metal-binding</keyword>
<keyword id="KW-0561">Oxygen transport</keyword>
<keyword id="KW-0813">Transport</keyword>
<dbReference type="SMR" id="P83270"/>
<dbReference type="iPTMnet" id="P83270"/>
<dbReference type="GO" id="GO:0072562">
    <property type="term" value="C:blood microparticle"/>
    <property type="evidence" value="ECO:0007669"/>
    <property type="project" value="TreeGrafter"/>
</dbReference>
<dbReference type="GO" id="GO:0031838">
    <property type="term" value="C:haptoglobin-hemoglobin complex"/>
    <property type="evidence" value="ECO:0007669"/>
    <property type="project" value="TreeGrafter"/>
</dbReference>
<dbReference type="GO" id="GO:0005833">
    <property type="term" value="C:hemoglobin complex"/>
    <property type="evidence" value="ECO:0007669"/>
    <property type="project" value="InterPro"/>
</dbReference>
<dbReference type="GO" id="GO:0031720">
    <property type="term" value="F:haptoglobin binding"/>
    <property type="evidence" value="ECO:0007669"/>
    <property type="project" value="TreeGrafter"/>
</dbReference>
<dbReference type="GO" id="GO:0020037">
    <property type="term" value="F:heme binding"/>
    <property type="evidence" value="ECO:0007669"/>
    <property type="project" value="InterPro"/>
</dbReference>
<dbReference type="GO" id="GO:0046872">
    <property type="term" value="F:metal ion binding"/>
    <property type="evidence" value="ECO:0007669"/>
    <property type="project" value="UniProtKB-KW"/>
</dbReference>
<dbReference type="GO" id="GO:0043177">
    <property type="term" value="F:organic acid binding"/>
    <property type="evidence" value="ECO:0007669"/>
    <property type="project" value="TreeGrafter"/>
</dbReference>
<dbReference type="GO" id="GO:0019825">
    <property type="term" value="F:oxygen binding"/>
    <property type="evidence" value="ECO:0007669"/>
    <property type="project" value="InterPro"/>
</dbReference>
<dbReference type="GO" id="GO:0005344">
    <property type="term" value="F:oxygen carrier activity"/>
    <property type="evidence" value="ECO:0007669"/>
    <property type="project" value="UniProtKB-KW"/>
</dbReference>
<dbReference type="GO" id="GO:0004601">
    <property type="term" value="F:peroxidase activity"/>
    <property type="evidence" value="ECO:0007669"/>
    <property type="project" value="TreeGrafter"/>
</dbReference>
<dbReference type="GO" id="GO:0042744">
    <property type="term" value="P:hydrogen peroxide catabolic process"/>
    <property type="evidence" value="ECO:0007669"/>
    <property type="project" value="TreeGrafter"/>
</dbReference>
<dbReference type="CDD" id="cd08927">
    <property type="entry name" value="Hb-alpha-like"/>
    <property type="match status" value="1"/>
</dbReference>
<dbReference type="FunFam" id="1.10.490.10:FF:000002">
    <property type="entry name" value="Hemoglobin subunit alpha"/>
    <property type="match status" value="1"/>
</dbReference>
<dbReference type="Gene3D" id="1.10.490.10">
    <property type="entry name" value="Globins"/>
    <property type="match status" value="1"/>
</dbReference>
<dbReference type="InterPro" id="IPR000971">
    <property type="entry name" value="Globin"/>
</dbReference>
<dbReference type="InterPro" id="IPR009050">
    <property type="entry name" value="Globin-like_sf"/>
</dbReference>
<dbReference type="InterPro" id="IPR012292">
    <property type="entry name" value="Globin/Proto"/>
</dbReference>
<dbReference type="InterPro" id="IPR002338">
    <property type="entry name" value="Hemoglobin_a-typ"/>
</dbReference>
<dbReference type="InterPro" id="IPR050056">
    <property type="entry name" value="Hemoglobin_oxygen_transport"/>
</dbReference>
<dbReference type="PANTHER" id="PTHR11442:SF91">
    <property type="entry name" value="EMBRYONIC ALPHA GLOBIN E1-RELATED"/>
    <property type="match status" value="1"/>
</dbReference>
<dbReference type="PANTHER" id="PTHR11442">
    <property type="entry name" value="HEMOGLOBIN FAMILY MEMBER"/>
    <property type="match status" value="1"/>
</dbReference>
<dbReference type="Pfam" id="PF00042">
    <property type="entry name" value="Globin"/>
    <property type="match status" value="1"/>
</dbReference>
<dbReference type="PRINTS" id="PR00612">
    <property type="entry name" value="ALPHAHAEM"/>
</dbReference>
<dbReference type="SUPFAM" id="SSF46458">
    <property type="entry name" value="Globin-like"/>
    <property type="match status" value="1"/>
</dbReference>
<dbReference type="PROSITE" id="PS01033">
    <property type="entry name" value="GLOBIN"/>
    <property type="match status" value="1"/>
</dbReference>
<evidence type="ECO:0000250" key="1"/>
<evidence type="ECO:0000255" key="2">
    <source>
        <dbReference type="PROSITE-ProRule" id="PRU00238"/>
    </source>
</evidence>
<evidence type="ECO:0000269" key="3">
    <source>
    </source>
</evidence>
<proteinExistence type="evidence at protein level"/>
<accession>P83270</accession>
<protein>
    <recommendedName>
        <fullName>Hemoglobin subunit alpha-1</fullName>
    </recommendedName>
    <alternativeName>
        <fullName>Alpha-1-globin</fullName>
    </alternativeName>
    <alternativeName>
        <fullName>Hemoglobin alpha-1 chain</fullName>
    </alternativeName>
</protein>
<name>HBA1_ANAMI</name>
<sequence>MSLTAKDKDTVRAFWAKASGKAAEIGSDALSRMLVVYPQTKTYFSHWKDLSPGSEPVKKHGKSVMGGVADAVMKIEDLNAGLLNLSELHAFTLRVDPANFKILSHNILVVMAIMFPKDFTPEVHVAMDKFLAALSRALAEKYR</sequence>
<reference key="1">
    <citation type="journal article" date="2002" name="J. Biol. Chem.">
        <title>The functionally distinct hemoglobins of the Arctic spotted wolffish Anarhichas minor.</title>
        <authorList>
            <person name="Verde C."/>
            <person name="Carratore V."/>
            <person name="Riccio A."/>
            <person name="Tamburrini M."/>
            <person name="Parisi E."/>
            <person name="Di Prisco G."/>
        </authorList>
    </citation>
    <scope>PROTEIN SEQUENCE OF 2-143</scope>
    <scope>FUNCTION</scope>
    <scope>TISSUE SPECIFICITY</scope>
    <scope>ACETYLATION AT SER-2</scope>
</reference>
<organism>
    <name type="scientific">Anarhichas minor</name>
    <name type="common">Arctic spotted wolffish</name>
    <dbReference type="NCBI Taxonomy" id="65739"/>
    <lineage>
        <taxon>Eukaryota</taxon>
        <taxon>Metazoa</taxon>
        <taxon>Chordata</taxon>
        <taxon>Craniata</taxon>
        <taxon>Vertebrata</taxon>
        <taxon>Euteleostomi</taxon>
        <taxon>Actinopterygii</taxon>
        <taxon>Neopterygii</taxon>
        <taxon>Teleostei</taxon>
        <taxon>Neoteleostei</taxon>
        <taxon>Acanthomorphata</taxon>
        <taxon>Eupercaria</taxon>
        <taxon>Perciformes</taxon>
        <taxon>Cottioidei</taxon>
        <taxon>Zoarcales</taxon>
        <taxon>Anarhichadidae</taxon>
        <taxon>Anarhichas</taxon>
    </lineage>
</organism>
<gene>
    <name type="primary">hba1</name>
</gene>